<dbReference type="EMBL" id="CP000880">
    <property type="protein sequence ID" value="ABX21517.1"/>
    <property type="molecule type" value="Genomic_DNA"/>
</dbReference>
<dbReference type="SMR" id="A9MFB2"/>
<dbReference type="STRING" id="41514.SARI_01625"/>
<dbReference type="KEGG" id="ses:SARI_01625"/>
<dbReference type="HOGENOM" id="CLU_089254_1_1_6"/>
<dbReference type="Proteomes" id="UP000002084">
    <property type="component" value="Chromosome"/>
</dbReference>
<dbReference type="GO" id="GO:0071111">
    <property type="term" value="F:cyclic-guanylate-specific phosphodiesterase activity"/>
    <property type="evidence" value="ECO:0007669"/>
    <property type="project" value="InterPro"/>
</dbReference>
<dbReference type="Gene3D" id="3.20.20.450">
    <property type="entry name" value="EAL domain"/>
    <property type="match status" value="1"/>
</dbReference>
<dbReference type="InterPro" id="IPR050706">
    <property type="entry name" value="Cyclic-di-GMP_PDE-like"/>
</dbReference>
<dbReference type="InterPro" id="IPR001633">
    <property type="entry name" value="EAL_dom"/>
</dbReference>
<dbReference type="InterPro" id="IPR035919">
    <property type="entry name" value="EAL_sf"/>
</dbReference>
<dbReference type="PANTHER" id="PTHR33121:SF69">
    <property type="entry name" value="ANTI-FLHC(2)FLHD(4) FACTOR YDIV-RELATED"/>
    <property type="match status" value="1"/>
</dbReference>
<dbReference type="PANTHER" id="PTHR33121">
    <property type="entry name" value="CYCLIC DI-GMP PHOSPHODIESTERASE PDEF"/>
    <property type="match status" value="1"/>
</dbReference>
<dbReference type="Pfam" id="PF00563">
    <property type="entry name" value="EAL"/>
    <property type="match status" value="1"/>
</dbReference>
<dbReference type="SUPFAM" id="SSF141868">
    <property type="entry name" value="EAL domain-like"/>
    <property type="match status" value="1"/>
</dbReference>
<reference key="1">
    <citation type="submission" date="2007-11" db="EMBL/GenBank/DDBJ databases">
        <authorList>
            <consortium name="The Salmonella enterica serovar Arizonae Genome Sequencing Project"/>
            <person name="McClelland M."/>
            <person name="Sanderson E.K."/>
            <person name="Porwollik S."/>
            <person name="Spieth J."/>
            <person name="Clifton W.S."/>
            <person name="Fulton R."/>
            <person name="Chunyan W."/>
            <person name="Wollam A."/>
            <person name="Shah N."/>
            <person name="Pepin K."/>
            <person name="Bhonagiri V."/>
            <person name="Nash W."/>
            <person name="Johnson M."/>
            <person name="Thiruvilangam P."/>
            <person name="Wilson R."/>
        </authorList>
    </citation>
    <scope>NUCLEOTIDE SEQUENCE [LARGE SCALE GENOMIC DNA]</scope>
    <source>
        <strain>ATCC BAA-731 / CDC346-86 / RSK2980</strain>
    </source>
</reference>
<organism>
    <name type="scientific">Salmonella arizonae (strain ATCC BAA-731 / CDC346-86 / RSK2980)</name>
    <dbReference type="NCBI Taxonomy" id="41514"/>
    <lineage>
        <taxon>Bacteria</taxon>
        <taxon>Pseudomonadati</taxon>
        <taxon>Pseudomonadota</taxon>
        <taxon>Gammaproteobacteria</taxon>
        <taxon>Enterobacterales</taxon>
        <taxon>Enterobacteriaceae</taxon>
        <taxon>Salmonella</taxon>
    </lineage>
</organism>
<evidence type="ECO:0000250" key="1"/>
<evidence type="ECO:0000305" key="2"/>
<comment type="function">
    <text evidence="1">Acts as an anti-FlhC(2)FlhD(4) factor by binding to FlhD, decreasing its ability to bind DNA, and thus negatively regulates expression of flagellar class II operons, decreasing motility in nutrient-poor medium. Required for resistance to host phagocyte oxidase (By similarity).</text>
</comment>
<comment type="subunit">
    <text evidence="1">Interacts with FlhD in the FlhC(2)FlhD(4) heterohexamer, inhibiting its ability to activate transcription.</text>
</comment>
<comment type="similarity">
    <text evidence="2">Belongs to the YdiV family.</text>
</comment>
<gene>
    <name type="primary">ydiV</name>
    <name type="ordered locus">SARI_01625</name>
</gene>
<feature type="chain" id="PRO_0000346865" description="Anti-FlhC(2)FlhD(4) factor YdiV">
    <location>
        <begin position="1"/>
        <end position="237"/>
    </location>
</feature>
<feature type="domain" description="EAL">
    <location>
        <begin position="1"/>
        <end position="237"/>
    </location>
</feature>
<accession>A9MFB2</accession>
<keyword id="KW-1185">Reference proteome</keyword>
<keyword id="KW-0678">Repressor</keyword>
<keyword id="KW-0804">Transcription</keyword>
<keyword id="KW-0805">Transcription regulation</keyword>
<keyword id="KW-0843">Virulence</keyword>
<name>YDIV_SALAR</name>
<protein>
    <recommendedName>
        <fullName>Anti-FlhC(2)FlhD(4) factor YdiV</fullName>
    </recommendedName>
</protein>
<proteinExistence type="inferred from homology"/>
<sequence length="237" mass="26421">MIASLDELYHSELFFLPAMDKNARLVGLEIIATFATEDGAVRMPTELVAPRLSVEEQYCLFVEKLALLETCQHFFIQHKLIAWLNLPPAISGLLLLDSELFSRAARFPFLELAINENYPGLNHGKENETLAHLAMHFPLMLANFGAGEASTKAIFDGLFKRIMLDKNFIQQRADMISFEPFMHAIVAQISSSCESLMIAGIDNEAMFARAAPLGFSALQGGLWPPVPVSQLIRLVQR</sequence>